<dbReference type="EC" id="2.3.2.34"/>
<dbReference type="EMBL" id="BX284601">
    <property type="protein sequence ID" value="CAB03238.1"/>
    <property type="molecule type" value="Genomic_DNA"/>
</dbReference>
<dbReference type="PIR" id="T24069">
    <property type="entry name" value="T24069"/>
</dbReference>
<dbReference type="RefSeq" id="NP_493024.1">
    <property type="nucleotide sequence ID" value="NM_060623.7"/>
</dbReference>
<dbReference type="SMR" id="Q9XVK5"/>
<dbReference type="BioGRID" id="38475">
    <property type="interactions" value="26"/>
</dbReference>
<dbReference type="FunCoup" id="Q9XVK5">
    <property type="interactions" value="1852"/>
</dbReference>
<dbReference type="STRING" id="6239.R09B3.4.1"/>
<dbReference type="PaxDb" id="6239-R09B3.4"/>
<dbReference type="PeptideAtlas" id="Q9XVK5"/>
<dbReference type="EnsemblMetazoa" id="R09B3.4.1">
    <property type="protein sequence ID" value="R09B3.4.1"/>
    <property type="gene ID" value="WBGene00006707"/>
</dbReference>
<dbReference type="GeneID" id="173072"/>
<dbReference type="KEGG" id="cel:CELE_R09B3.4"/>
<dbReference type="UCSC" id="R09B3.4">
    <property type="organism name" value="c. elegans"/>
</dbReference>
<dbReference type="AGR" id="WB:WBGene00006707"/>
<dbReference type="CTD" id="173072"/>
<dbReference type="WormBase" id="R09B3.4">
    <property type="protein sequence ID" value="CE16309"/>
    <property type="gene ID" value="WBGene00006707"/>
    <property type="gene designation" value="ubc-12"/>
</dbReference>
<dbReference type="eggNOG" id="KOG0420">
    <property type="taxonomic scope" value="Eukaryota"/>
</dbReference>
<dbReference type="GeneTree" id="ENSGT00940000154349"/>
<dbReference type="HOGENOM" id="CLU_030988_6_4_1"/>
<dbReference type="InParanoid" id="Q9XVK5"/>
<dbReference type="OMA" id="DKLLVKX"/>
<dbReference type="OrthoDB" id="10249039at2759"/>
<dbReference type="PhylomeDB" id="Q9XVK5"/>
<dbReference type="UniPathway" id="UPA00885"/>
<dbReference type="PRO" id="PR:Q9XVK5"/>
<dbReference type="Proteomes" id="UP000001940">
    <property type="component" value="Chromosome I"/>
</dbReference>
<dbReference type="Bgee" id="WBGene00006707">
    <property type="expression patterns" value="Expressed in germ line (C elegans) and 4 other cell types or tissues"/>
</dbReference>
<dbReference type="GO" id="GO:0005737">
    <property type="term" value="C:cytoplasm"/>
    <property type="evidence" value="ECO:0007669"/>
    <property type="project" value="UniProtKB-SubCell"/>
</dbReference>
<dbReference type="GO" id="GO:0005524">
    <property type="term" value="F:ATP binding"/>
    <property type="evidence" value="ECO:0007669"/>
    <property type="project" value="UniProtKB-KW"/>
</dbReference>
<dbReference type="GO" id="GO:0061654">
    <property type="term" value="F:NEDD8 conjugating enzyme activity"/>
    <property type="evidence" value="ECO:0007669"/>
    <property type="project" value="UniProtKB-EC"/>
</dbReference>
<dbReference type="GO" id="GO:0019788">
    <property type="term" value="F:NEDD8 transferase activity"/>
    <property type="evidence" value="ECO:0000314"/>
    <property type="project" value="UniProtKB"/>
</dbReference>
<dbReference type="GO" id="GO:0043518">
    <property type="term" value="P:negative regulation of DNA damage response, signal transduction by p53 class mediator"/>
    <property type="evidence" value="ECO:0000315"/>
    <property type="project" value="UniProtKB"/>
</dbReference>
<dbReference type="GO" id="GO:0110039">
    <property type="term" value="P:positive regulation of nematode male tail tip morphogenesis"/>
    <property type="evidence" value="ECO:0000315"/>
    <property type="project" value="UniProtKB"/>
</dbReference>
<dbReference type="GO" id="GO:0045116">
    <property type="term" value="P:protein neddylation"/>
    <property type="evidence" value="ECO:0000314"/>
    <property type="project" value="UniProtKB"/>
</dbReference>
<dbReference type="CDD" id="cd23794">
    <property type="entry name" value="UBCc_UBE2F_UBE2M"/>
    <property type="match status" value="1"/>
</dbReference>
<dbReference type="FunFam" id="3.10.110.10:FF:000033">
    <property type="entry name" value="NEDD8-conjugating enzyme UBE2F"/>
    <property type="match status" value="1"/>
</dbReference>
<dbReference type="Gene3D" id="3.10.110.10">
    <property type="entry name" value="Ubiquitin Conjugating Enzyme"/>
    <property type="match status" value="1"/>
</dbReference>
<dbReference type="InterPro" id="IPR050113">
    <property type="entry name" value="Ub_conjugating_enzyme"/>
</dbReference>
<dbReference type="InterPro" id="IPR000608">
    <property type="entry name" value="UBQ-conjugat_E2_core"/>
</dbReference>
<dbReference type="InterPro" id="IPR023313">
    <property type="entry name" value="UBQ-conjugating_AS"/>
</dbReference>
<dbReference type="InterPro" id="IPR016135">
    <property type="entry name" value="UBQ-conjugating_enzyme/RWD"/>
</dbReference>
<dbReference type="PANTHER" id="PTHR24067">
    <property type="entry name" value="UBIQUITIN-CONJUGATING ENZYME E2"/>
    <property type="match status" value="1"/>
</dbReference>
<dbReference type="Pfam" id="PF00179">
    <property type="entry name" value="UQ_con"/>
    <property type="match status" value="1"/>
</dbReference>
<dbReference type="SMART" id="SM00212">
    <property type="entry name" value="UBCc"/>
    <property type="match status" value="1"/>
</dbReference>
<dbReference type="SUPFAM" id="SSF54495">
    <property type="entry name" value="UBC-like"/>
    <property type="match status" value="1"/>
</dbReference>
<dbReference type="PROSITE" id="PS00183">
    <property type="entry name" value="UBC_1"/>
    <property type="match status" value="1"/>
</dbReference>
<dbReference type="PROSITE" id="PS50127">
    <property type="entry name" value="UBC_2"/>
    <property type="match status" value="1"/>
</dbReference>
<keyword id="KW-0067">ATP-binding</keyword>
<keyword id="KW-0963">Cytoplasm</keyword>
<keyword id="KW-0217">Developmental protein</keyword>
<keyword id="KW-0547">Nucleotide-binding</keyword>
<keyword id="KW-1185">Reference proteome</keyword>
<keyword id="KW-0808">Transferase</keyword>
<keyword id="KW-0833">Ubl conjugation pathway</keyword>
<name>UBC12_CAEEL</name>
<reference key="1">
    <citation type="journal article" date="1998" name="Science">
        <title>Genome sequence of the nematode C. elegans: a platform for investigating biology.</title>
        <authorList>
            <consortium name="The C. elegans sequencing consortium"/>
        </authorList>
    </citation>
    <scope>NUCLEOTIDE SEQUENCE [LARGE SCALE GENOMIC DNA]</scope>
    <source>
        <strain>Bristol N2</strain>
    </source>
</reference>
<reference key="2">
    <citation type="journal article" date="2000" name="Dev. Biol.">
        <title>The NED-8 conjugating system in Caenorhabditis elegans is required for embryogenesis and terminal differentiation of the hypodermis.</title>
        <authorList>
            <person name="Jones D."/>
            <person name="Candido E.P.M."/>
        </authorList>
    </citation>
    <scope>IDENTIFICATION</scope>
    <scope>NOMENCLATURE</scope>
    <scope>DEVELOPMENTAL STAGE</scope>
    <scope>FUNCTION</scope>
    <scope>DISRUPTION PHENOTYPE</scope>
</reference>
<reference key="3">
    <citation type="journal article" date="2011" name="PLoS Genet.">
        <title>A bow-tie genetic architecture for morphogenesis suggested by a genome-wide RNAi screen in Caenorhabditis elegans.</title>
        <authorList>
            <person name="Nelson M.D."/>
            <person name="Zhou E."/>
            <person name="Kiontke K."/>
            <person name="Fradin H."/>
            <person name="Maldonado G."/>
            <person name="Martin D."/>
            <person name="Shah K."/>
            <person name="Fitch D.H."/>
        </authorList>
    </citation>
    <scope>FUNCTION</scope>
    <scope>SUBCELLULAR LOCATION</scope>
    <scope>DEVELOPMENTAL STAGE</scope>
    <scope>DISRUPTION PHENOTYPE</scope>
</reference>
<feature type="chain" id="PRO_0000082493" description="NEDD8-conjugating enzyme ubc-12">
    <location>
        <begin position="1"/>
        <end position="180"/>
    </location>
</feature>
<feature type="domain" description="UBC core" evidence="1">
    <location>
        <begin position="24"/>
        <end position="180"/>
    </location>
</feature>
<feature type="active site" description="Glycyl thioester intermediate" evidence="1 2">
    <location>
        <position position="112"/>
    </location>
</feature>
<comment type="function">
    <text evidence="3 4">Accepts the ubiquitin-like protein NEDD8 from the uba-3-ula-1 E1 complex and catalyzes its covalent attachment to other proteins (PubMed:10993680). Plays a role in male tail tip morphogenesis (PubMed:21408209).</text>
</comment>
<comment type="catalytic activity">
    <reaction>
        <text>[E1 NEDD8-activating enzyme]-S-[NEDD8 protein]-yl-L-cysteine + [E2 NEDD8-conjugating enzyme]-L-cysteine = [E1 NEDD8-activating enzyme]-L-cysteine + [E2 NEDD8-conjugating enzyme]-S-[NEDD8-protein]-yl-L-cysteine.</text>
        <dbReference type="EC" id="2.3.2.34"/>
    </reaction>
</comment>
<comment type="pathway">
    <text>Protein modification; protein neddylation.</text>
</comment>
<comment type="subcellular location">
    <subcellularLocation>
        <location evidence="4">Cytoplasm</location>
    </subcellularLocation>
</comment>
<comment type="developmental stage">
    <text evidence="3 4">Expressed throughout development (PubMed:10993680). Highly expressed in hyp10 tail tip cells in early L4 larval stage males (PubMed:21408209). Expressed in hyp10 tail tip cells prior to and during male tail tip retraction (PubMed:21408209).</text>
</comment>
<comment type="disruption phenotype">
    <text evidence="3 4">Worms either arrest during embryonic development, or show vulval eversion at the L4 stage and burst at the vulva during the L4-to-adult molt (PubMed:10993680). Those who survive to the adult stage display severe abnormalities in the structure of alae (PubMed:10993680). RNAi-mediated knockdown results in severe male tail tip defects (PubMed:21408209).</text>
</comment>
<comment type="similarity">
    <text evidence="1">Belongs to the ubiquitin-conjugating enzyme family. UBC12 subfamily.</text>
</comment>
<proteinExistence type="evidence at transcript level"/>
<gene>
    <name evidence="5" type="primary">ubc-12</name>
    <name evidence="5" type="ORF">R09B3.4</name>
</gene>
<evidence type="ECO:0000255" key="1">
    <source>
        <dbReference type="PROSITE-ProRule" id="PRU00388"/>
    </source>
</evidence>
<evidence type="ECO:0000255" key="2">
    <source>
        <dbReference type="PROSITE-ProRule" id="PRU10133"/>
    </source>
</evidence>
<evidence type="ECO:0000269" key="3">
    <source>
    </source>
</evidence>
<evidence type="ECO:0000269" key="4">
    <source>
    </source>
</evidence>
<evidence type="ECO:0000312" key="5">
    <source>
        <dbReference type="WormBase" id="R09B3.4"/>
    </source>
</evidence>
<organism>
    <name type="scientific">Caenorhabditis elegans</name>
    <dbReference type="NCBI Taxonomy" id="6239"/>
    <lineage>
        <taxon>Eukaryota</taxon>
        <taxon>Metazoa</taxon>
        <taxon>Ecdysozoa</taxon>
        <taxon>Nematoda</taxon>
        <taxon>Chromadorea</taxon>
        <taxon>Rhabditida</taxon>
        <taxon>Rhabditina</taxon>
        <taxon>Rhabditomorpha</taxon>
        <taxon>Rhabditoidea</taxon>
        <taxon>Rhabditidae</taxon>
        <taxon>Peloderinae</taxon>
        <taxon>Caenorhabditis</taxon>
    </lineage>
</organism>
<accession>Q9XVK5</accession>
<sequence length="180" mass="21101">MFNLQKRINGNNEDGRYLETRIAVRDKLLAQELQQLETALRDQKQKLWHLEVPSTSCLHELELTVTPQEGIYRGGKFRFKITVPPEYNNVPPVVKCLTKVWHPNINEDGSICLSILRQNSLDQYGWRPTRNLTDVVHGLVSLFNDLMDFNDALNIQAAQMWSQNRESFNHRVREYISRYC</sequence>
<protein>
    <recommendedName>
        <fullName>NEDD8-conjugating enzyme ubc-12</fullName>
        <ecNumber>2.3.2.34</ecNumber>
    </recommendedName>
    <alternativeName>
        <fullName>NEDD8 carrier protein</fullName>
    </alternativeName>
    <alternativeName>
        <fullName>Ubiquitin-conjugating enzyme E2 12</fullName>
    </alternativeName>
</protein>